<dbReference type="EMBL" id="AE017143">
    <property type="protein sequence ID" value="AAP96679.1"/>
    <property type="molecule type" value="Genomic_DNA"/>
</dbReference>
<dbReference type="RefSeq" id="WP_010945705.1">
    <property type="nucleotide sequence ID" value="NC_002940.2"/>
</dbReference>
<dbReference type="SMR" id="Q7VKF0"/>
<dbReference type="STRING" id="233412.HD_1961"/>
<dbReference type="KEGG" id="hdu:HD_1961"/>
<dbReference type="eggNOG" id="COG0098">
    <property type="taxonomic scope" value="Bacteria"/>
</dbReference>
<dbReference type="HOGENOM" id="CLU_065898_2_2_6"/>
<dbReference type="OrthoDB" id="9809045at2"/>
<dbReference type="Proteomes" id="UP000001022">
    <property type="component" value="Chromosome"/>
</dbReference>
<dbReference type="GO" id="GO:0015935">
    <property type="term" value="C:small ribosomal subunit"/>
    <property type="evidence" value="ECO:0007669"/>
    <property type="project" value="InterPro"/>
</dbReference>
<dbReference type="GO" id="GO:0019843">
    <property type="term" value="F:rRNA binding"/>
    <property type="evidence" value="ECO:0007669"/>
    <property type="project" value="UniProtKB-UniRule"/>
</dbReference>
<dbReference type="GO" id="GO:0003735">
    <property type="term" value="F:structural constituent of ribosome"/>
    <property type="evidence" value="ECO:0007669"/>
    <property type="project" value="InterPro"/>
</dbReference>
<dbReference type="GO" id="GO:0006412">
    <property type="term" value="P:translation"/>
    <property type="evidence" value="ECO:0007669"/>
    <property type="project" value="UniProtKB-UniRule"/>
</dbReference>
<dbReference type="FunFam" id="3.30.160.20:FF:000001">
    <property type="entry name" value="30S ribosomal protein S5"/>
    <property type="match status" value="1"/>
</dbReference>
<dbReference type="FunFam" id="3.30.230.10:FF:000002">
    <property type="entry name" value="30S ribosomal protein S5"/>
    <property type="match status" value="1"/>
</dbReference>
<dbReference type="Gene3D" id="3.30.160.20">
    <property type="match status" value="1"/>
</dbReference>
<dbReference type="Gene3D" id="3.30.230.10">
    <property type="match status" value="1"/>
</dbReference>
<dbReference type="HAMAP" id="MF_01307_B">
    <property type="entry name" value="Ribosomal_uS5_B"/>
    <property type="match status" value="1"/>
</dbReference>
<dbReference type="InterPro" id="IPR020568">
    <property type="entry name" value="Ribosomal_Su5_D2-typ_SF"/>
</dbReference>
<dbReference type="InterPro" id="IPR000851">
    <property type="entry name" value="Ribosomal_uS5"/>
</dbReference>
<dbReference type="InterPro" id="IPR005712">
    <property type="entry name" value="Ribosomal_uS5_bac-type"/>
</dbReference>
<dbReference type="InterPro" id="IPR005324">
    <property type="entry name" value="Ribosomal_uS5_C"/>
</dbReference>
<dbReference type="InterPro" id="IPR013810">
    <property type="entry name" value="Ribosomal_uS5_N"/>
</dbReference>
<dbReference type="InterPro" id="IPR018192">
    <property type="entry name" value="Ribosomal_uS5_N_CS"/>
</dbReference>
<dbReference type="InterPro" id="IPR014721">
    <property type="entry name" value="Ribsml_uS5_D2-typ_fold_subgr"/>
</dbReference>
<dbReference type="NCBIfam" id="TIGR01021">
    <property type="entry name" value="rpsE_bact"/>
    <property type="match status" value="1"/>
</dbReference>
<dbReference type="PANTHER" id="PTHR48277">
    <property type="entry name" value="MITOCHONDRIAL RIBOSOMAL PROTEIN S5"/>
    <property type="match status" value="1"/>
</dbReference>
<dbReference type="PANTHER" id="PTHR48277:SF1">
    <property type="entry name" value="MITOCHONDRIAL RIBOSOMAL PROTEIN S5"/>
    <property type="match status" value="1"/>
</dbReference>
<dbReference type="Pfam" id="PF00333">
    <property type="entry name" value="Ribosomal_S5"/>
    <property type="match status" value="1"/>
</dbReference>
<dbReference type="Pfam" id="PF03719">
    <property type="entry name" value="Ribosomal_S5_C"/>
    <property type="match status" value="1"/>
</dbReference>
<dbReference type="SUPFAM" id="SSF54768">
    <property type="entry name" value="dsRNA-binding domain-like"/>
    <property type="match status" value="1"/>
</dbReference>
<dbReference type="SUPFAM" id="SSF54211">
    <property type="entry name" value="Ribosomal protein S5 domain 2-like"/>
    <property type="match status" value="1"/>
</dbReference>
<dbReference type="PROSITE" id="PS00585">
    <property type="entry name" value="RIBOSOMAL_S5"/>
    <property type="match status" value="1"/>
</dbReference>
<dbReference type="PROSITE" id="PS50881">
    <property type="entry name" value="S5_DSRBD"/>
    <property type="match status" value="1"/>
</dbReference>
<accession>Q7VKF0</accession>
<organism>
    <name type="scientific">Haemophilus ducreyi (strain 35000HP / ATCC 700724)</name>
    <dbReference type="NCBI Taxonomy" id="233412"/>
    <lineage>
        <taxon>Bacteria</taxon>
        <taxon>Pseudomonadati</taxon>
        <taxon>Pseudomonadota</taxon>
        <taxon>Gammaproteobacteria</taxon>
        <taxon>Pasteurellales</taxon>
        <taxon>Pasteurellaceae</taxon>
        <taxon>Haemophilus</taxon>
    </lineage>
</organism>
<gene>
    <name evidence="1" type="primary">rpsE</name>
    <name type="ordered locus">HD_1961</name>
</gene>
<keyword id="KW-1185">Reference proteome</keyword>
<keyword id="KW-0687">Ribonucleoprotein</keyword>
<keyword id="KW-0689">Ribosomal protein</keyword>
<keyword id="KW-0694">RNA-binding</keyword>
<keyword id="KW-0699">rRNA-binding</keyword>
<proteinExistence type="inferred from homology"/>
<comment type="function">
    <text evidence="1">With S4 and S12 plays an important role in translational accuracy.</text>
</comment>
<comment type="function">
    <text evidence="1">Located at the back of the 30S subunit body where it stabilizes the conformation of the head with respect to the body.</text>
</comment>
<comment type="subunit">
    <text evidence="1">Part of the 30S ribosomal subunit. Contacts proteins S4 and S8.</text>
</comment>
<comment type="domain">
    <text>The N-terminal domain interacts with the head of the 30S subunit; the C-terminal domain interacts with the body and contacts protein S4. The interaction surface between S4 and S5 is involved in control of translational fidelity.</text>
</comment>
<comment type="similarity">
    <text evidence="1">Belongs to the universal ribosomal protein uS5 family.</text>
</comment>
<name>RS5_HAEDU</name>
<reference key="1">
    <citation type="submission" date="2003-06" db="EMBL/GenBank/DDBJ databases">
        <title>The complete genome sequence of Haemophilus ducreyi.</title>
        <authorList>
            <person name="Munson R.S. Jr."/>
            <person name="Ray W.C."/>
            <person name="Mahairas G."/>
            <person name="Sabo P."/>
            <person name="Mungur R."/>
            <person name="Johnson L."/>
            <person name="Nguyen D."/>
            <person name="Wang J."/>
            <person name="Forst C."/>
            <person name="Hood L."/>
        </authorList>
    </citation>
    <scope>NUCLEOTIDE SEQUENCE [LARGE SCALE GENOMIC DNA]</scope>
    <source>
        <strain>35000HP / ATCC 700724</strain>
    </source>
</reference>
<evidence type="ECO:0000255" key="1">
    <source>
        <dbReference type="HAMAP-Rule" id="MF_01307"/>
    </source>
</evidence>
<evidence type="ECO:0000305" key="2"/>
<feature type="chain" id="PRO_0000131522" description="Small ribosomal subunit protein uS5">
    <location>
        <begin position="1"/>
        <end position="166"/>
    </location>
</feature>
<feature type="domain" description="S5 DRBM" evidence="1">
    <location>
        <begin position="11"/>
        <end position="74"/>
    </location>
</feature>
<sequence length="166" mass="17528">MSNIEKQAGELQEKLIAVNRVSKTVKGGRIMSFTALTVVGDGNGRVGFGYGKAREVPAAIQKAMEKARRNMINVALNEGTLQHPVKGSHTGSRVFMQPASEGTGIIAGGAMRAVLEVAGVHNVLSKAYGSTNPINVVRATIDALANMKSPEMVAAKRGKTVEEIWG</sequence>
<protein>
    <recommendedName>
        <fullName evidence="1">Small ribosomal subunit protein uS5</fullName>
    </recommendedName>
    <alternativeName>
        <fullName evidence="2">30S ribosomal protein S5</fullName>
    </alternativeName>
</protein>